<keyword id="KW-0027">Amidation</keyword>
<keyword id="KW-0903">Direct protein sequencing</keyword>
<keyword id="KW-0372">Hormone</keyword>
<keyword id="KW-1185">Reference proteome</keyword>
<keyword id="KW-0964">Secreted</keyword>
<feature type="peptide" id="PRO_0000044799" description="Pancreatic polypeptide">
    <location>
        <begin position="1"/>
        <end position="36"/>
    </location>
</feature>
<feature type="modified residue" description="Tyrosine amide" evidence="2">
    <location>
        <position position="36"/>
    </location>
</feature>
<organism>
    <name type="scientific">Erinaceus europaeus</name>
    <name type="common">Western European hedgehog</name>
    <dbReference type="NCBI Taxonomy" id="9365"/>
    <lineage>
        <taxon>Eukaryota</taxon>
        <taxon>Metazoa</taxon>
        <taxon>Chordata</taxon>
        <taxon>Craniata</taxon>
        <taxon>Vertebrata</taxon>
        <taxon>Euteleostomi</taxon>
        <taxon>Mammalia</taxon>
        <taxon>Eutheria</taxon>
        <taxon>Laurasiatheria</taxon>
        <taxon>Eulipotyphla</taxon>
        <taxon>Erinaceidae</taxon>
        <taxon>Erinaceinae</taxon>
        <taxon>Erinaceus</taxon>
    </lineage>
</organism>
<evidence type="ECO:0000250" key="1">
    <source>
        <dbReference type="UniProtKB" id="P01298"/>
    </source>
</evidence>
<evidence type="ECO:0000269" key="2">
    <source>
    </source>
</evidence>
<evidence type="ECO:0000303" key="3">
    <source>
    </source>
</evidence>
<evidence type="ECO:0000305" key="4"/>
<gene>
    <name type="primary">PPY</name>
</gene>
<comment type="function">
    <text evidence="1">Hormone secreted by pancreatic cells that acts as a regulator of pancreatic and gastrointestinal functions probably by signaling through the G protein-coupled receptor NPY4R2.</text>
</comment>
<comment type="subcellular location">
    <subcellularLocation>
        <location evidence="1">Secreted</location>
    </subcellularLocation>
</comment>
<comment type="similarity">
    <text evidence="4">Belongs to the NPY family.</text>
</comment>
<protein>
    <recommendedName>
        <fullName evidence="3">Pancreatic polypeptide</fullName>
        <shortName evidence="3">PP</shortName>
    </recommendedName>
</protein>
<dbReference type="SMR" id="P41335"/>
<dbReference type="STRING" id="9365.ENSEEUP00000006078"/>
<dbReference type="eggNOG" id="ENOG502TD4B">
    <property type="taxonomic scope" value="Eukaryota"/>
</dbReference>
<dbReference type="HOGENOM" id="CLU_165150_1_0_1"/>
<dbReference type="InParanoid" id="P41335"/>
<dbReference type="TreeFam" id="TF332778"/>
<dbReference type="Proteomes" id="UP000079721">
    <property type="component" value="Unplaced"/>
</dbReference>
<dbReference type="GO" id="GO:0005615">
    <property type="term" value="C:extracellular space"/>
    <property type="evidence" value="ECO:0007669"/>
    <property type="project" value="TreeGrafter"/>
</dbReference>
<dbReference type="GO" id="GO:0005184">
    <property type="term" value="F:neuropeptide hormone activity"/>
    <property type="evidence" value="ECO:0007669"/>
    <property type="project" value="TreeGrafter"/>
</dbReference>
<dbReference type="GO" id="GO:0031841">
    <property type="term" value="F:neuropeptide Y receptor binding"/>
    <property type="evidence" value="ECO:0007669"/>
    <property type="project" value="TreeGrafter"/>
</dbReference>
<dbReference type="GO" id="GO:0007631">
    <property type="term" value="P:feeding behavior"/>
    <property type="evidence" value="ECO:0007669"/>
    <property type="project" value="TreeGrafter"/>
</dbReference>
<dbReference type="GO" id="GO:0007218">
    <property type="term" value="P:neuropeptide signaling pathway"/>
    <property type="evidence" value="ECO:0007669"/>
    <property type="project" value="TreeGrafter"/>
</dbReference>
<dbReference type="CDD" id="cd00126">
    <property type="entry name" value="PAH"/>
    <property type="match status" value="1"/>
</dbReference>
<dbReference type="Gene3D" id="6.10.250.900">
    <property type="match status" value="1"/>
</dbReference>
<dbReference type="InterPro" id="IPR001955">
    <property type="entry name" value="Pancreatic_hormone-like"/>
</dbReference>
<dbReference type="InterPro" id="IPR020392">
    <property type="entry name" value="Pancreatic_hormone-like_CS"/>
</dbReference>
<dbReference type="PANTHER" id="PTHR10533">
    <property type="entry name" value="NEUROPEPTIDE Y/PANCREATIC HORMONE/PEPTIDE YY"/>
    <property type="match status" value="1"/>
</dbReference>
<dbReference type="PANTHER" id="PTHR10533:SF2">
    <property type="entry name" value="PANCREATIC POLYPEPTIDE PROHORMONE"/>
    <property type="match status" value="1"/>
</dbReference>
<dbReference type="Pfam" id="PF00159">
    <property type="entry name" value="Hormone_3"/>
    <property type="match status" value="1"/>
</dbReference>
<dbReference type="PRINTS" id="PR00278">
    <property type="entry name" value="PANCHORMONE"/>
</dbReference>
<dbReference type="SMART" id="SM00309">
    <property type="entry name" value="PAH"/>
    <property type="match status" value="1"/>
</dbReference>
<dbReference type="PROSITE" id="PS00265">
    <property type="entry name" value="PANCREATIC_HORMONE_1"/>
    <property type="match status" value="1"/>
</dbReference>
<dbReference type="PROSITE" id="PS50276">
    <property type="entry name" value="PANCREATIC_HORMONE_2"/>
    <property type="match status" value="1"/>
</dbReference>
<sequence length="36" mass="4234">VPLEPVYPGDNATPEQMAHYAAELRRYINMLTRPRY</sequence>
<accession>P41335</accession>
<proteinExistence type="evidence at protein level"/>
<name>PAHO_ERIEU</name>
<reference key="1">
    <citation type="journal article" date="1993" name="Regul. Pept.">
        <title>The primary structure of pancreatic polypeptide from a primitive insectivorous mammal, the European hedgehog (Erinaceous europaeus).</title>
        <authorList>
            <person name="Marks N.J."/>
            <person name="Shaw C."/>
            <person name="Halton D.W."/>
            <person name="Thim L."/>
        </authorList>
    </citation>
    <scope>PROTEIN SEQUENCE</scope>
    <scope>AMIDATION AT TYR-36</scope>
    <source>
        <tissue>Pancreas</tissue>
    </source>
</reference>